<name>PDAD_PYRAB</name>
<organism>
    <name type="scientific">Pyrococcus abyssi (strain GE5 / Orsay)</name>
    <dbReference type="NCBI Taxonomy" id="272844"/>
    <lineage>
        <taxon>Archaea</taxon>
        <taxon>Methanobacteriati</taxon>
        <taxon>Methanobacteriota</taxon>
        <taxon>Thermococci</taxon>
        <taxon>Thermococcales</taxon>
        <taxon>Thermococcaceae</taxon>
        <taxon>Pyrococcus</taxon>
    </lineage>
</organism>
<protein>
    <recommendedName>
        <fullName evidence="1">Pyruvoyl-dependent arginine decarboxylase</fullName>
        <shortName evidence="1">PvlArgDC</shortName>
        <ecNumber evidence="1">4.1.1.19</ecNumber>
    </recommendedName>
    <component>
        <recommendedName>
            <fullName evidence="1">Pyruvoyl-dependent arginine decarboxylase subunit beta</fullName>
        </recommendedName>
    </component>
    <component>
        <recommendedName>
            <fullName evidence="1">Pyruvoyl-dependent arginine decarboxylase subunit alpha</fullName>
        </recommendedName>
    </component>
</protein>
<evidence type="ECO:0000255" key="1">
    <source>
        <dbReference type="HAMAP-Rule" id="MF_01404"/>
    </source>
</evidence>
<sequence length="158" mass="17066">MSWTTPKKAIMLAAAAEGGTKLNAFDNALLKMGIGNVNLVKLSSVIPAHIEWLDELPKNIPIGMLLPTVYAHIESDEPGSTISAALGVGLSENNEGGLIYEYAGYCTKEEAEEMVRKMVEEGFKVRGWKLKEIKVISAEITVKDKPAAAVAAVVMFPY</sequence>
<proteinExistence type="inferred from homology"/>
<reference key="1">
    <citation type="journal article" date="2003" name="Mol. Microbiol.">
        <title>An integrated analysis of the genome of the hyperthermophilic archaeon Pyrococcus abyssi.</title>
        <authorList>
            <person name="Cohen G.N."/>
            <person name="Barbe V."/>
            <person name="Flament D."/>
            <person name="Galperin M."/>
            <person name="Heilig R."/>
            <person name="Lecompte O."/>
            <person name="Poch O."/>
            <person name="Prieur D."/>
            <person name="Querellou J."/>
            <person name="Ripp R."/>
            <person name="Thierry J.-C."/>
            <person name="Van der Oost J."/>
            <person name="Weissenbach J."/>
            <person name="Zivanovic Y."/>
            <person name="Forterre P."/>
        </authorList>
    </citation>
    <scope>NUCLEOTIDE SEQUENCE [LARGE SCALE GENOMIC DNA]</scope>
    <source>
        <strain>GE5 / Orsay</strain>
    </source>
</reference>
<reference key="2">
    <citation type="journal article" date="2012" name="Curr. Microbiol.">
        <title>Re-annotation of two hyperthermophilic archaea Pyrococcus abyssi GE5 and Pyrococcus furiosus DSM 3638.</title>
        <authorList>
            <person name="Gao J."/>
            <person name="Wang J."/>
        </authorList>
    </citation>
    <scope>GENOME REANNOTATION</scope>
    <source>
        <strain>GE5 / Orsay</strain>
    </source>
</reference>
<feature type="chain" id="PRO_0000023328" description="Pyruvoyl-dependent arginine decarboxylase subunit beta" evidence="1">
    <location>
        <begin position="1"/>
        <end position="43"/>
    </location>
</feature>
<feature type="chain" id="PRO_0000023329" description="Pyruvoyl-dependent arginine decarboxylase subunit alpha" evidence="1">
    <location>
        <begin position="44"/>
        <end position="158"/>
    </location>
</feature>
<feature type="site" description="Cleavage (non-hydrolytic)" evidence="1">
    <location>
        <begin position="43"/>
        <end position="44"/>
    </location>
</feature>
<feature type="modified residue" description="Pyruvic acid (Ser)" evidence="1">
    <location>
        <position position="44"/>
    </location>
</feature>
<accession>Q9V173</accession>
<accession>G8ZJ18</accession>
<keyword id="KW-0210">Decarboxylase</keyword>
<keyword id="KW-0456">Lyase</keyword>
<keyword id="KW-0670">Pyruvate</keyword>
<dbReference type="EC" id="4.1.1.19" evidence="1"/>
<dbReference type="EMBL" id="AJ248284">
    <property type="protein sequence ID" value="CAB49477.1"/>
    <property type="molecule type" value="Genomic_DNA"/>
</dbReference>
<dbReference type="EMBL" id="HE613800">
    <property type="protein sequence ID" value="CCE69945.1"/>
    <property type="molecule type" value="Genomic_DNA"/>
</dbReference>
<dbReference type="PIR" id="F75174">
    <property type="entry name" value="F75174"/>
</dbReference>
<dbReference type="RefSeq" id="WP_010867679.1">
    <property type="nucleotide sequence ID" value="NC_000868.1"/>
</dbReference>
<dbReference type="SMR" id="Q9V173"/>
<dbReference type="STRING" id="272844.PAB0382"/>
<dbReference type="KEGG" id="pab:PAB0382"/>
<dbReference type="PATRIC" id="fig|272844.11.peg.591"/>
<dbReference type="eggNOG" id="arCOG04490">
    <property type="taxonomic scope" value="Archaea"/>
</dbReference>
<dbReference type="HOGENOM" id="CLU_114389_2_0_2"/>
<dbReference type="OrthoDB" id="30748at2157"/>
<dbReference type="PhylomeDB" id="Q9V173"/>
<dbReference type="Proteomes" id="UP000000810">
    <property type="component" value="Chromosome"/>
</dbReference>
<dbReference type="Proteomes" id="UP000009139">
    <property type="component" value="Chromosome"/>
</dbReference>
<dbReference type="GO" id="GO:0008792">
    <property type="term" value="F:arginine decarboxylase activity"/>
    <property type="evidence" value="ECO:0007669"/>
    <property type="project" value="UniProtKB-UniRule"/>
</dbReference>
<dbReference type="GO" id="GO:0006527">
    <property type="term" value="P:arginine catabolic process"/>
    <property type="evidence" value="ECO:0007669"/>
    <property type="project" value="InterPro"/>
</dbReference>
<dbReference type="Gene3D" id="3.30.60.30">
    <property type="match status" value="1"/>
</dbReference>
<dbReference type="Gene3D" id="3.50.20.10">
    <property type="entry name" value="Pyruvoyl-Dependent Histidine Decarboxylase, subunit B"/>
    <property type="match status" value="1"/>
</dbReference>
<dbReference type="HAMAP" id="MF_01404">
    <property type="entry name" value="PvlArgDC"/>
    <property type="match status" value="1"/>
</dbReference>
<dbReference type="InterPro" id="IPR016104">
    <property type="entry name" value="Pyr-dep_his/arg-deCO2ase"/>
</dbReference>
<dbReference type="InterPro" id="IPR016105">
    <property type="entry name" value="Pyr-dep_his/arg-deCO2ase_sand"/>
</dbReference>
<dbReference type="InterPro" id="IPR002724">
    <property type="entry name" value="Pyruvoyl-dep_arg_deCO2ase"/>
</dbReference>
<dbReference type="NCBIfam" id="TIGR00286">
    <property type="entry name" value="pyruvoyl-dependent arginine decarboxylase"/>
    <property type="match status" value="1"/>
</dbReference>
<dbReference type="PANTHER" id="PTHR40438">
    <property type="entry name" value="PYRUVOYL-DEPENDENT ARGININE DECARBOXYLASE"/>
    <property type="match status" value="1"/>
</dbReference>
<dbReference type="PANTHER" id="PTHR40438:SF1">
    <property type="entry name" value="PYRUVOYL-DEPENDENT ARGININE DECARBOXYLASE"/>
    <property type="match status" value="1"/>
</dbReference>
<dbReference type="Pfam" id="PF01862">
    <property type="entry name" value="PvlArgDC"/>
    <property type="match status" value="1"/>
</dbReference>
<dbReference type="PIRSF" id="PIRSF005216">
    <property type="entry name" value="Pyruvoyl-dep_arg_deCO2ase"/>
    <property type="match status" value="1"/>
</dbReference>
<dbReference type="SFLD" id="SFLDF00471">
    <property type="entry name" value="Pyruvoyl-dependent_arginine_de"/>
    <property type="match status" value="1"/>
</dbReference>
<dbReference type="SFLD" id="SFLDG01170">
    <property type="entry name" value="Pyruvoyl-dependent_arginine_de"/>
    <property type="match status" value="1"/>
</dbReference>
<dbReference type="SFLD" id="SFLDS00055">
    <property type="entry name" value="Pyruvoyl-Dependent_Histidine/A"/>
    <property type="match status" value="1"/>
</dbReference>
<dbReference type="SUPFAM" id="SSF56271">
    <property type="entry name" value="Pyruvoyl-dependent histidine and arginine decarboxylases"/>
    <property type="match status" value="1"/>
</dbReference>
<gene>
    <name evidence="1" type="primary">pdaD</name>
    <name type="ordered locus">PYRAB05550</name>
    <name type="ORF">PAB0382</name>
</gene>
<comment type="catalytic activity">
    <reaction evidence="1">
        <text>L-arginine + H(+) = agmatine + CO2</text>
        <dbReference type="Rhea" id="RHEA:17641"/>
        <dbReference type="ChEBI" id="CHEBI:15378"/>
        <dbReference type="ChEBI" id="CHEBI:16526"/>
        <dbReference type="ChEBI" id="CHEBI:32682"/>
        <dbReference type="ChEBI" id="CHEBI:58145"/>
        <dbReference type="EC" id="4.1.1.19"/>
    </reaction>
</comment>
<comment type="cofactor">
    <cofactor evidence="1">
        <name>pyruvate</name>
        <dbReference type="ChEBI" id="CHEBI:15361"/>
    </cofactor>
    <text evidence="1">Binds 1 pyruvoyl group covalently per subunit.</text>
</comment>
<comment type="similarity">
    <text evidence="1">Belongs to the PdaD family.</text>
</comment>